<proteinExistence type="inferred from homology"/>
<protein>
    <recommendedName>
        <fullName evidence="1">Protein RecA</fullName>
    </recommendedName>
    <alternativeName>
        <fullName evidence="1">Recombinase A</fullName>
    </alternativeName>
</protein>
<organism>
    <name type="scientific">Pseudarthrobacter chlorophenolicus (strain ATCC 700700 / DSM 12829 / CIP 107037 / JCM 12360 / KCTC 9906 / NCIMB 13794 / A6)</name>
    <name type="common">Arthrobacter chlorophenolicus</name>
    <dbReference type="NCBI Taxonomy" id="452863"/>
    <lineage>
        <taxon>Bacteria</taxon>
        <taxon>Bacillati</taxon>
        <taxon>Actinomycetota</taxon>
        <taxon>Actinomycetes</taxon>
        <taxon>Micrococcales</taxon>
        <taxon>Micrococcaceae</taxon>
        <taxon>Pseudarthrobacter</taxon>
    </lineage>
</organism>
<evidence type="ECO:0000255" key="1">
    <source>
        <dbReference type="HAMAP-Rule" id="MF_00268"/>
    </source>
</evidence>
<evidence type="ECO:0000256" key="2">
    <source>
        <dbReference type="SAM" id="MobiDB-lite"/>
    </source>
</evidence>
<sequence>MAAAPDRAKALEAALAQIDKQFGKGSVMRLGDEVRAPIEVIPTGSIALDVALGIGGLPRGRVIEIYGPESSGKTTVALHAVANAQRAGGIAAFIDAEHALDPDYAAKLGVDTDALLVSQPDTGEQALEIMDMLVGSGSLDIVVIDSVAALVPRAEIEGDMGDSHVGLQARLMSQALRKITGRLSQTKTTAIFINQLREKIGVFFGSPETTTGGKALKFYASVRIDVRRIQTLKEGADSVGNRTKAKIVKNKMAPPFKIAEFDIIYGQGISREGGIIDMGVEHGIIKKSGSWFTYDGDQLGQGMENSRRFLRDNPELAAELERLIKEKLGVGVKPADAESKEDSPKLKAVDGF</sequence>
<comment type="function">
    <text evidence="1">Can catalyze the hydrolysis of ATP in the presence of single-stranded DNA, the ATP-dependent uptake of single-stranded DNA by duplex DNA, and the ATP-dependent hybridization of homologous single-stranded DNAs. It interacts with LexA causing its activation and leading to its autocatalytic cleavage.</text>
</comment>
<comment type="subcellular location">
    <subcellularLocation>
        <location evidence="1">Cytoplasm</location>
    </subcellularLocation>
</comment>
<comment type="similarity">
    <text evidence="1">Belongs to the RecA family.</text>
</comment>
<gene>
    <name evidence="1" type="primary">recA</name>
    <name type="ordered locus">Achl_1462</name>
</gene>
<name>RECA_PSECP</name>
<dbReference type="EMBL" id="CP001341">
    <property type="protein sequence ID" value="ACL39451.1"/>
    <property type="molecule type" value="Genomic_DNA"/>
</dbReference>
<dbReference type="RefSeq" id="WP_015936673.1">
    <property type="nucleotide sequence ID" value="NC_011886.1"/>
</dbReference>
<dbReference type="SMR" id="B8HG89"/>
<dbReference type="STRING" id="452863.Achl_1462"/>
<dbReference type="KEGG" id="ach:Achl_1462"/>
<dbReference type="eggNOG" id="COG0468">
    <property type="taxonomic scope" value="Bacteria"/>
</dbReference>
<dbReference type="HOGENOM" id="CLU_040469_3_2_11"/>
<dbReference type="OrthoDB" id="9776733at2"/>
<dbReference type="Proteomes" id="UP000002505">
    <property type="component" value="Chromosome"/>
</dbReference>
<dbReference type="GO" id="GO:0005829">
    <property type="term" value="C:cytosol"/>
    <property type="evidence" value="ECO:0007669"/>
    <property type="project" value="TreeGrafter"/>
</dbReference>
<dbReference type="GO" id="GO:0005524">
    <property type="term" value="F:ATP binding"/>
    <property type="evidence" value="ECO:0007669"/>
    <property type="project" value="UniProtKB-UniRule"/>
</dbReference>
<dbReference type="GO" id="GO:0016887">
    <property type="term" value="F:ATP hydrolysis activity"/>
    <property type="evidence" value="ECO:0007669"/>
    <property type="project" value="InterPro"/>
</dbReference>
<dbReference type="GO" id="GO:0140664">
    <property type="term" value="F:ATP-dependent DNA damage sensor activity"/>
    <property type="evidence" value="ECO:0007669"/>
    <property type="project" value="InterPro"/>
</dbReference>
<dbReference type="GO" id="GO:0003684">
    <property type="term" value="F:damaged DNA binding"/>
    <property type="evidence" value="ECO:0007669"/>
    <property type="project" value="UniProtKB-UniRule"/>
</dbReference>
<dbReference type="GO" id="GO:0003697">
    <property type="term" value="F:single-stranded DNA binding"/>
    <property type="evidence" value="ECO:0007669"/>
    <property type="project" value="UniProtKB-UniRule"/>
</dbReference>
<dbReference type="GO" id="GO:0006310">
    <property type="term" value="P:DNA recombination"/>
    <property type="evidence" value="ECO:0007669"/>
    <property type="project" value="UniProtKB-UniRule"/>
</dbReference>
<dbReference type="GO" id="GO:0006281">
    <property type="term" value="P:DNA repair"/>
    <property type="evidence" value="ECO:0007669"/>
    <property type="project" value="UniProtKB-UniRule"/>
</dbReference>
<dbReference type="GO" id="GO:0009432">
    <property type="term" value="P:SOS response"/>
    <property type="evidence" value="ECO:0007669"/>
    <property type="project" value="UniProtKB-UniRule"/>
</dbReference>
<dbReference type="CDD" id="cd00983">
    <property type="entry name" value="RecA"/>
    <property type="match status" value="1"/>
</dbReference>
<dbReference type="FunFam" id="3.40.50.300:FF:000087">
    <property type="entry name" value="Recombinase RecA"/>
    <property type="match status" value="1"/>
</dbReference>
<dbReference type="Gene3D" id="3.40.50.300">
    <property type="entry name" value="P-loop containing nucleotide triphosphate hydrolases"/>
    <property type="match status" value="1"/>
</dbReference>
<dbReference type="HAMAP" id="MF_00268">
    <property type="entry name" value="RecA"/>
    <property type="match status" value="1"/>
</dbReference>
<dbReference type="InterPro" id="IPR003593">
    <property type="entry name" value="AAA+_ATPase"/>
</dbReference>
<dbReference type="InterPro" id="IPR013765">
    <property type="entry name" value="DNA_recomb/repair_RecA"/>
</dbReference>
<dbReference type="InterPro" id="IPR020584">
    <property type="entry name" value="DNA_recomb/repair_RecA_CS"/>
</dbReference>
<dbReference type="InterPro" id="IPR027417">
    <property type="entry name" value="P-loop_NTPase"/>
</dbReference>
<dbReference type="InterPro" id="IPR049261">
    <property type="entry name" value="RecA-like_C"/>
</dbReference>
<dbReference type="InterPro" id="IPR049428">
    <property type="entry name" value="RecA-like_N"/>
</dbReference>
<dbReference type="InterPro" id="IPR020588">
    <property type="entry name" value="RecA_ATP-bd"/>
</dbReference>
<dbReference type="InterPro" id="IPR023400">
    <property type="entry name" value="RecA_C_sf"/>
</dbReference>
<dbReference type="InterPro" id="IPR020587">
    <property type="entry name" value="RecA_monomer-monomer_interface"/>
</dbReference>
<dbReference type="NCBIfam" id="TIGR02012">
    <property type="entry name" value="tigrfam_recA"/>
    <property type="match status" value="1"/>
</dbReference>
<dbReference type="PANTHER" id="PTHR45900:SF1">
    <property type="entry name" value="MITOCHONDRIAL DNA REPAIR PROTEIN RECA HOMOLOG-RELATED"/>
    <property type="match status" value="1"/>
</dbReference>
<dbReference type="PANTHER" id="PTHR45900">
    <property type="entry name" value="RECA"/>
    <property type="match status" value="1"/>
</dbReference>
<dbReference type="Pfam" id="PF00154">
    <property type="entry name" value="RecA"/>
    <property type="match status" value="1"/>
</dbReference>
<dbReference type="Pfam" id="PF21096">
    <property type="entry name" value="RecA_C"/>
    <property type="match status" value="1"/>
</dbReference>
<dbReference type="PRINTS" id="PR00142">
    <property type="entry name" value="RECA"/>
</dbReference>
<dbReference type="SMART" id="SM00382">
    <property type="entry name" value="AAA"/>
    <property type="match status" value="1"/>
</dbReference>
<dbReference type="SUPFAM" id="SSF52540">
    <property type="entry name" value="P-loop containing nucleoside triphosphate hydrolases"/>
    <property type="match status" value="1"/>
</dbReference>
<dbReference type="SUPFAM" id="SSF54752">
    <property type="entry name" value="RecA protein, C-terminal domain"/>
    <property type="match status" value="1"/>
</dbReference>
<dbReference type="PROSITE" id="PS00321">
    <property type="entry name" value="RECA_1"/>
    <property type="match status" value="1"/>
</dbReference>
<dbReference type="PROSITE" id="PS50162">
    <property type="entry name" value="RECA_2"/>
    <property type="match status" value="1"/>
</dbReference>
<dbReference type="PROSITE" id="PS50163">
    <property type="entry name" value="RECA_3"/>
    <property type="match status" value="1"/>
</dbReference>
<reference key="1">
    <citation type="submission" date="2009-01" db="EMBL/GenBank/DDBJ databases">
        <title>Complete sequence of chromosome of Arthrobacter chlorophenolicus A6.</title>
        <authorList>
            <consortium name="US DOE Joint Genome Institute"/>
            <person name="Lucas S."/>
            <person name="Copeland A."/>
            <person name="Lapidus A."/>
            <person name="Glavina del Rio T."/>
            <person name="Tice H."/>
            <person name="Bruce D."/>
            <person name="Goodwin L."/>
            <person name="Pitluck S."/>
            <person name="Goltsman E."/>
            <person name="Clum A."/>
            <person name="Larimer F."/>
            <person name="Land M."/>
            <person name="Hauser L."/>
            <person name="Kyrpides N."/>
            <person name="Mikhailova N."/>
            <person name="Jansson J."/>
            <person name="Richardson P."/>
        </authorList>
    </citation>
    <scope>NUCLEOTIDE SEQUENCE [LARGE SCALE GENOMIC DNA]</scope>
    <source>
        <strain>ATCC 700700 / DSM 12829 / CIP 107037 / JCM 12360 / KCTC 9906 / NCIMB 13794 / A6</strain>
    </source>
</reference>
<accession>B8HG89</accession>
<keyword id="KW-0067">ATP-binding</keyword>
<keyword id="KW-0963">Cytoplasm</keyword>
<keyword id="KW-0227">DNA damage</keyword>
<keyword id="KW-0233">DNA recombination</keyword>
<keyword id="KW-0234">DNA repair</keyword>
<keyword id="KW-0238">DNA-binding</keyword>
<keyword id="KW-0547">Nucleotide-binding</keyword>
<keyword id="KW-0742">SOS response</keyword>
<feature type="chain" id="PRO_1000193287" description="Protein RecA">
    <location>
        <begin position="1"/>
        <end position="352"/>
    </location>
</feature>
<feature type="region of interest" description="Disordered" evidence="2">
    <location>
        <begin position="332"/>
        <end position="352"/>
    </location>
</feature>
<feature type="compositionally biased region" description="Basic and acidic residues" evidence="2">
    <location>
        <begin position="335"/>
        <end position="352"/>
    </location>
</feature>
<feature type="binding site" evidence="1">
    <location>
        <begin position="67"/>
        <end position="74"/>
    </location>
    <ligand>
        <name>ATP</name>
        <dbReference type="ChEBI" id="CHEBI:30616"/>
    </ligand>
</feature>